<protein>
    <recommendedName>
        <fullName evidence="1">Nucleoprotein</fullName>
    </recommendedName>
    <alternativeName>
        <fullName evidence="1">Nucleocapsid protein</fullName>
        <shortName evidence="1">NC</shortName>
        <shortName evidence="1">Protein N</shortName>
    </alternativeName>
</protein>
<feature type="chain" id="PRO_0000105997" description="Nucleoprotein">
    <location>
        <begin position="1"/>
        <end position="382"/>
    </location>
</feature>
<feature type="domain" description="CoV N NTD" evidence="2">
    <location>
        <begin position="31"/>
        <end position="153"/>
    </location>
</feature>
<feature type="domain" description="CoV N CTD" evidence="3">
    <location>
        <begin position="224"/>
        <end position="337"/>
    </location>
</feature>
<feature type="region of interest" description="RNA-binding" evidence="1">
    <location>
        <begin position="33"/>
        <end position="159"/>
    </location>
</feature>
<feature type="region of interest" description="Disordered" evidence="4">
    <location>
        <begin position="152"/>
        <end position="240"/>
    </location>
</feature>
<feature type="region of interest" description="Dimerization" evidence="1">
    <location>
        <begin position="231"/>
        <end position="334"/>
    </location>
</feature>
<feature type="region of interest" description="Disordered" evidence="4">
    <location>
        <begin position="331"/>
        <end position="355"/>
    </location>
</feature>
<feature type="compositionally biased region" description="Low complexity" evidence="4">
    <location>
        <begin position="154"/>
        <end position="183"/>
    </location>
</feature>
<feature type="compositionally biased region" description="Basic and acidic residues" evidence="4">
    <location>
        <begin position="201"/>
        <end position="235"/>
    </location>
</feature>
<feature type="compositionally biased region" description="Basic and acidic residues" evidence="4">
    <location>
        <begin position="334"/>
        <end position="354"/>
    </location>
</feature>
<feature type="modified residue" description="Phosphoserine; by host" evidence="1">
    <location>
        <position position="156"/>
    </location>
</feature>
<feature type="modified residue" description="Phosphoserine; by host" evidence="1">
    <location>
        <position position="254"/>
    </location>
</feature>
<feature type="modified residue" description="Phosphoserine; by host" evidence="1">
    <location>
        <position position="256"/>
    </location>
</feature>
<proteinExistence type="inferred from homology"/>
<organism>
    <name type="scientific">Canine coronavirus (strain K378)</name>
    <name type="common">CCoV</name>
    <name type="synonym">Canine enteric coronavirus</name>
    <dbReference type="NCBI Taxonomy" id="33732"/>
    <lineage>
        <taxon>Viruses</taxon>
        <taxon>Riboviria</taxon>
        <taxon>Orthornavirae</taxon>
        <taxon>Pisuviricota</taxon>
        <taxon>Pisoniviricetes</taxon>
        <taxon>Nidovirales</taxon>
        <taxon>Cornidovirineae</taxon>
        <taxon>Coronaviridae</taxon>
        <taxon>Orthocoronavirinae</taxon>
        <taxon>Alphacoronavirus</taxon>
        <taxon>Tegacovirus</taxon>
        <taxon>Alphacoronavirus 1</taxon>
    </lineage>
</organism>
<accession>Q04700</accession>
<evidence type="ECO:0000255" key="1">
    <source>
        <dbReference type="HAMAP-Rule" id="MF_04095"/>
    </source>
</evidence>
<evidence type="ECO:0000255" key="2">
    <source>
        <dbReference type="PROSITE-ProRule" id="PRU01276"/>
    </source>
</evidence>
<evidence type="ECO:0000255" key="3">
    <source>
        <dbReference type="PROSITE-ProRule" id="PRU01277"/>
    </source>
</evidence>
<evidence type="ECO:0000256" key="4">
    <source>
        <dbReference type="SAM" id="MobiDB-lite"/>
    </source>
</evidence>
<reference key="1">
    <citation type="journal article" date="1992" name="Virology">
        <title>Genomic organization and expression of the 3' end of the canine and feline enteric coronaviruses.</title>
        <authorList>
            <person name="Vennema H."/>
            <person name="Rossen J.W.A."/>
            <person name="Wesseling J."/>
            <person name="Horzinek M.C."/>
            <person name="Rottier P.J.M."/>
        </authorList>
    </citation>
    <scope>NUCLEOTIDE SEQUENCE [GENOMIC RNA]</scope>
</reference>
<comment type="function">
    <text evidence="1">Packages the positive strand viral genome RNA into a helical ribonucleocapsid (RNP) and plays a fundamental role during virion assembly through its interactions with the viral genome and membrane protein M. Plays an important role in enhancing the efficiency of subgenomic viral RNA transcription as well as viral replication.</text>
</comment>
<comment type="subunit">
    <text evidence="1">Homooligomer. Both monomeric and oligomeric forms interact with RNA. Interacts with protein M. Interacts with NSP3; this interaction serves to tether the genome to the newly translated replicase-transcriptase complex at a very early stage of infection.</text>
</comment>
<comment type="subcellular location">
    <subcellularLocation>
        <location evidence="1">Virion</location>
    </subcellularLocation>
    <subcellularLocation>
        <location evidence="1">Host endoplasmic reticulum-Golgi intermediate compartment</location>
    </subcellularLocation>
    <subcellularLocation>
        <location evidence="1">Host Golgi apparatus</location>
    </subcellularLocation>
    <text evidence="1">Located inside the virion, complexed with the viral RNA. Probably associates with ER-derived membranes where it participates in viral RNA synthesis and virus budding.</text>
</comment>
<comment type="PTM">
    <text evidence="1">ADP-ribosylated. The ADP-ribosylation is retained in the virion during infection.</text>
</comment>
<comment type="PTM">
    <text evidence="1">Phosphorylated on serine and threonine residues.</text>
</comment>
<comment type="similarity">
    <text evidence="1">Belongs to the alphacoronavirus nucleocapsid protein family.</text>
</comment>
<keyword id="KW-0013">ADP-ribosylation</keyword>
<keyword id="KW-1040">Host Golgi apparatus</keyword>
<keyword id="KW-0597">Phosphoprotein</keyword>
<keyword id="KW-0687">Ribonucleoprotein</keyword>
<keyword id="KW-0694">RNA-binding</keyword>
<keyword id="KW-0804">Transcription</keyword>
<keyword id="KW-0805">Transcription regulation</keyword>
<keyword id="KW-0543">Viral nucleoprotein</keyword>
<keyword id="KW-0946">Virion</keyword>
<organismHost>
    <name type="scientific">Canis lupus familiaris</name>
    <name type="common">Dog</name>
    <name type="synonym">Canis familiaris</name>
    <dbReference type="NCBI Taxonomy" id="9615"/>
</organismHost>
<gene>
    <name evidence="1" type="primary">N</name>
</gene>
<sequence>MANQGQRVQWGVDITKKRGLSNSRGRKNNTIPLSFFNPITLQQGSKFWNLCPRDFVPKGIGNKDQQIGYWNRQSRYRMVKGQRKELPERWFFYYLGTGPHADAKFKDRIDGVVWVAKDGAMNKPTTLGNRGANNESKALKFDGKVPGEFQLEVNQSRDNSRSPSQSRSQSRNRSQSRGRQQSNNKKDDSVEQAVLAALKKLGVDTEKQQQRSRSKSKERSNSKTRDTTPKNENKHTWKRTAGKGDVTKFYGARSSSANFGDSDLVANGNGAKHYPQLAECVPSVSSILFGSYWTAKEDGDQIEVTFTHKYHLPKDDPKTGQFLQQINAYARPSEVAKEQRQRKARSKSAERVEQEVVPDALTENYTDVFDDTQVEIIDEVTN</sequence>
<dbReference type="EMBL" id="X66717">
    <property type="protein sequence ID" value="CAA47246.1"/>
    <property type="molecule type" value="Genomic_RNA"/>
</dbReference>
<dbReference type="PIR" id="A44056">
    <property type="entry name" value="A44056"/>
</dbReference>
<dbReference type="SMR" id="Q04700"/>
<dbReference type="GO" id="GO:0044172">
    <property type="term" value="C:host cell endoplasmic reticulum-Golgi intermediate compartment"/>
    <property type="evidence" value="ECO:0007669"/>
    <property type="project" value="UniProtKB-SubCell"/>
</dbReference>
<dbReference type="GO" id="GO:0044177">
    <property type="term" value="C:host cell Golgi apparatus"/>
    <property type="evidence" value="ECO:0007669"/>
    <property type="project" value="UniProtKB-SubCell"/>
</dbReference>
<dbReference type="GO" id="GO:1990904">
    <property type="term" value="C:ribonucleoprotein complex"/>
    <property type="evidence" value="ECO:0007669"/>
    <property type="project" value="UniProtKB-KW"/>
</dbReference>
<dbReference type="GO" id="GO:0019013">
    <property type="term" value="C:viral nucleocapsid"/>
    <property type="evidence" value="ECO:0007669"/>
    <property type="project" value="UniProtKB-KW"/>
</dbReference>
<dbReference type="GO" id="GO:0003723">
    <property type="term" value="F:RNA binding"/>
    <property type="evidence" value="ECO:0007669"/>
    <property type="project" value="UniProtKB-KW"/>
</dbReference>
<dbReference type="CDD" id="cd21595">
    <property type="entry name" value="CoV_N-CTD"/>
    <property type="match status" value="1"/>
</dbReference>
<dbReference type="CDD" id="cd21554">
    <property type="entry name" value="CoV_N-NTD"/>
    <property type="match status" value="1"/>
</dbReference>
<dbReference type="HAMAP" id="MF_04095">
    <property type="entry name" value="ALPHA_CORONA_NCAP"/>
    <property type="match status" value="1"/>
</dbReference>
<dbReference type="InterPro" id="IPR044344">
    <property type="entry name" value="N_prot_C_CoV"/>
</dbReference>
<dbReference type="InterPro" id="IPR044345">
    <property type="entry name" value="N_prot_N_CoV"/>
</dbReference>
<dbReference type="InterPro" id="IPR042548">
    <property type="entry name" value="NCAP_aCoV"/>
</dbReference>
<dbReference type="InterPro" id="IPR001218">
    <property type="entry name" value="Nucleocap_CoV"/>
</dbReference>
<dbReference type="InterPro" id="IPR037179">
    <property type="entry name" value="Nucleocapsid_C"/>
</dbReference>
<dbReference type="InterPro" id="IPR037195">
    <property type="entry name" value="Nucleocapsid_N"/>
</dbReference>
<dbReference type="Pfam" id="PF00937">
    <property type="entry name" value="CoV_nucleocap"/>
    <property type="match status" value="1"/>
</dbReference>
<dbReference type="PIRSF" id="PIRSF003888">
    <property type="entry name" value="Corona_nucleocap"/>
    <property type="match status" value="1"/>
</dbReference>
<dbReference type="SUPFAM" id="SSF110304">
    <property type="entry name" value="Coronavirus RNA-binding domain"/>
    <property type="match status" value="1"/>
</dbReference>
<dbReference type="SUPFAM" id="SSF103068">
    <property type="entry name" value="Nucleocapsid protein dimerization domain"/>
    <property type="match status" value="1"/>
</dbReference>
<dbReference type="PROSITE" id="PS51929">
    <property type="entry name" value="COV_N_CTD"/>
    <property type="match status" value="1"/>
</dbReference>
<dbReference type="PROSITE" id="PS51928">
    <property type="entry name" value="COV_N_NTD"/>
    <property type="match status" value="1"/>
</dbReference>
<name>NCAP_CVCAK</name>